<evidence type="ECO:0000255" key="1">
    <source>
        <dbReference type="PROSITE-ProRule" id="PRU00335"/>
    </source>
</evidence>
<evidence type="ECO:0000256" key="2">
    <source>
        <dbReference type="SAM" id="MobiDB-lite"/>
    </source>
</evidence>
<reference key="1">
    <citation type="journal article" date="2003" name="Proc. Natl. Acad. Sci. U.S.A.">
        <title>The complete genome sequence of Mycobacterium bovis.</title>
        <authorList>
            <person name="Garnier T."/>
            <person name="Eiglmeier K."/>
            <person name="Camus J.-C."/>
            <person name="Medina N."/>
            <person name="Mansoor H."/>
            <person name="Pryor M."/>
            <person name="Duthoy S."/>
            <person name="Grondin S."/>
            <person name="Lacroix C."/>
            <person name="Monsempe C."/>
            <person name="Simon S."/>
            <person name="Harris B."/>
            <person name="Atkin R."/>
            <person name="Doggett J."/>
            <person name="Mayes R."/>
            <person name="Keating L."/>
            <person name="Wheeler P.R."/>
            <person name="Parkhill J."/>
            <person name="Barrell B.G."/>
            <person name="Cole S.T."/>
            <person name="Gordon S.V."/>
            <person name="Hewinson R.G."/>
        </authorList>
    </citation>
    <scope>NUCLEOTIDE SEQUENCE [LARGE SCALE GENOMIC DNA]</scope>
    <source>
        <strain>ATCC BAA-935 / AF2122/97</strain>
    </source>
</reference>
<reference key="2">
    <citation type="journal article" date="2017" name="Genome Announc.">
        <title>Updated reference genome sequence and annotation of Mycobacterium bovis AF2122/97.</title>
        <authorList>
            <person name="Malone K.M."/>
            <person name="Farrell D."/>
            <person name="Stuber T.P."/>
            <person name="Schubert O.T."/>
            <person name="Aebersold R."/>
            <person name="Robbe-Austerman S."/>
            <person name="Gordon S.V."/>
        </authorList>
    </citation>
    <scope>NUCLEOTIDE SEQUENCE [LARGE SCALE GENOMIC DNA]</scope>
    <scope>GENOME REANNOTATION</scope>
    <source>
        <strain>ATCC BAA-935 / AF2122/97</strain>
    </source>
</reference>
<organism>
    <name type="scientific">Mycobacterium bovis (strain ATCC BAA-935 / AF2122/97)</name>
    <dbReference type="NCBI Taxonomy" id="233413"/>
    <lineage>
        <taxon>Bacteria</taxon>
        <taxon>Bacillati</taxon>
        <taxon>Actinomycetota</taxon>
        <taxon>Actinomycetes</taxon>
        <taxon>Mycobacteriales</taxon>
        <taxon>Mycobacteriaceae</taxon>
        <taxon>Mycobacterium</taxon>
        <taxon>Mycobacterium tuberculosis complex</taxon>
    </lineage>
</organism>
<feature type="chain" id="PRO_0000070661" description="Uncharacterized HTH-type transcriptional regulator Mb1388c">
    <location>
        <begin position="1"/>
        <end position="261"/>
    </location>
</feature>
<feature type="domain" description="HTH tetR-type" evidence="1">
    <location>
        <begin position="15"/>
        <end position="75"/>
    </location>
</feature>
<feature type="DNA-binding region" description="H-T-H motif" evidence="1">
    <location>
        <begin position="38"/>
        <end position="57"/>
    </location>
</feature>
<feature type="region of interest" description="Disordered" evidence="2">
    <location>
        <begin position="234"/>
        <end position="261"/>
    </location>
</feature>
<feature type="compositionally biased region" description="Low complexity" evidence="2">
    <location>
        <begin position="241"/>
        <end position="261"/>
    </location>
</feature>
<keyword id="KW-0238">DNA-binding</keyword>
<keyword id="KW-1185">Reference proteome</keyword>
<keyword id="KW-0677">Repeat</keyword>
<keyword id="KW-0804">Transcription</keyword>
<keyword id="KW-0805">Transcription regulation</keyword>
<sequence length="261" mass="28253">MQTTPGKRQRRQRGSINPEDIISGAFELAQQVSIDNLSMPLLGKHLGVGVTSIYWYFRKKDDLLNAMTDRALSKYVFATPYIEAGDWRETLRNHARSMRKTFADNPVLCDLILIRAALSPKTARLGAQEMEKAIANLVTAGLSLEDAFDIYSAVSVHVRGSVVLDRLSRKSQSAGSGPSAIEHPVAIDPATTPLLAHATGRGHRIGAPDETNFEYGLECILDHAGRLIEQSSKAAGEVAVRRPTATADAPTPGARAKAVAR</sequence>
<dbReference type="EMBL" id="LT708304">
    <property type="protein sequence ID" value="SIT99991.1"/>
    <property type="molecule type" value="Genomic_DNA"/>
</dbReference>
<dbReference type="RefSeq" id="NP_855042.1">
    <property type="nucleotide sequence ID" value="NC_002945.3"/>
</dbReference>
<dbReference type="RefSeq" id="WP_003898836.1">
    <property type="nucleotide sequence ID" value="NC_002945.4"/>
</dbReference>
<dbReference type="SMR" id="P67435"/>
<dbReference type="KEGG" id="mbo:BQ2027_MB1388C"/>
<dbReference type="PATRIC" id="fig|233413.5.peg.1520"/>
<dbReference type="Proteomes" id="UP000001419">
    <property type="component" value="Chromosome"/>
</dbReference>
<dbReference type="GO" id="GO:0003700">
    <property type="term" value="F:DNA-binding transcription factor activity"/>
    <property type="evidence" value="ECO:0007669"/>
    <property type="project" value="TreeGrafter"/>
</dbReference>
<dbReference type="GO" id="GO:0000976">
    <property type="term" value="F:transcription cis-regulatory region binding"/>
    <property type="evidence" value="ECO:0007669"/>
    <property type="project" value="TreeGrafter"/>
</dbReference>
<dbReference type="GO" id="GO:0045892">
    <property type="term" value="P:negative regulation of DNA-templated transcription"/>
    <property type="evidence" value="ECO:0007669"/>
    <property type="project" value="InterPro"/>
</dbReference>
<dbReference type="Gene3D" id="1.10.10.60">
    <property type="entry name" value="Homeodomain-like"/>
    <property type="match status" value="1"/>
</dbReference>
<dbReference type="Gene3D" id="1.10.357.10">
    <property type="entry name" value="Tetracycline Repressor, domain 2"/>
    <property type="match status" value="1"/>
</dbReference>
<dbReference type="InterPro" id="IPR023772">
    <property type="entry name" value="DNA-bd_HTH_TetR-type_CS"/>
</dbReference>
<dbReference type="InterPro" id="IPR009057">
    <property type="entry name" value="Homeodomain-like_sf"/>
</dbReference>
<dbReference type="InterPro" id="IPR050109">
    <property type="entry name" value="HTH-type_TetR-like_transc_reg"/>
</dbReference>
<dbReference type="InterPro" id="IPR001647">
    <property type="entry name" value="HTH_TetR"/>
</dbReference>
<dbReference type="InterPro" id="IPR004111">
    <property type="entry name" value="Repressor_TetR_C"/>
</dbReference>
<dbReference type="InterPro" id="IPR036271">
    <property type="entry name" value="Tet_transcr_reg_TetR-rel_C_sf"/>
</dbReference>
<dbReference type="PANTHER" id="PTHR30055">
    <property type="entry name" value="HTH-TYPE TRANSCRIPTIONAL REGULATOR RUTR"/>
    <property type="match status" value="1"/>
</dbReference>
<dbReference type="PANTHER" id="PTHR30055:SF207">
    <property type="entry name" value="HTH-TYPE TRANSCRIPTIONAL REPRESSOR FATR"/>
    <property type="match status" value="1"/>
</dbReference>
<dbReference type="Pfam" id="PF02909">
    <property type="entry name" value="TetR_C_1"/>
    <property type="match status" value="1"/>
</dbReference>
<dbReference type="Pfam" id="PF00440">
    <property type="entry name" value="TetR_N"/>
    <property type="match status" value="1"/>
</dbReference>
<dbReference type="SUPFAM" id="SSF46689">
    <property type="entry name" value="Homeodomain-like"/>
    <property type="match status" value="1"/>
</dbReference>
<dbReference type="SUPFAM" id="SSF48498">
    <property type="entry name" value="Tetracyclin repressor-like, C-terminal domain"/>
    <property type="match status" value="1"/>
</dbReference>
<dbReference type="PROSITE" id="PS01081">
    <property type="entry name" value="HTH_TETR_1"/>
    <property type="match status" value="1"/>
</dbReference>
<dbReference type="PROSITE" id="PS50977">
    <property type="entry name" value="HTH_TETR_2"/>
    <property type="match status" value="1"/>
</dbReference>
<gene>
    <name type="ordered locus">BQ2027_MB1388C</name>
</gene>
<proteinExistence type="predicted"/>
<protein>
    <recommendedName>
        <fullName>Uncharacterized HTH-type transcriptional regulator Mb1388c</fullName>
    </recommendedName>
</protein>
<accession>P67435</accession>
<accession>A0A1R3XY41</accession>
<accession>Q11023</accession>
<accession>X2BI41</accession>
<name>Y1388_MYCBO</name>